<keyword id="KW-0106">Calcium</keyword>
<keyword id="KW-1015">Disulfide bond</keyword>
<keyword id="KW-0325">Glycoprotein</keyword>
<keyword id="KW-0326">Glycosidase</keyword>
<keyword id="KW-1032">Host cell membrane</keyword>
<keyword id="KW-1043">Host membrane</keyword>
<keyword id="KW-0378">Hydrolase</keyword>
<keyword id="KW-0472">Membrane</keyword>
<keyword id="KW-0479">Metal-binding</keyword>
<keyword id="KW-0735">Signal-anchor</keyword>
<keyword id="KW-0812">Transmembrane</keyword>
<keyword id="KW-1133">Transmembrane helix</keyword>
<keyword id="KW-0946">Virion</keyword>
<feature type="chain" id="PRO_0000078716" description="Neuraminidase">
    <location>
        <begin position="1"/>
        <end position="468"/>
    </location>
</feature>
<feature type="topological domain" description="Intravirion" evidence="1">
    <location>
        <begin position="1"/>
        <end position="15"/>
    </location>
</feature>
<feature type="transmembrane region" description="Helical" evidence="1">
    <location>
        <begin position="16"/>
        <end position="36"/>
    </location>
</feature>
<feature type="topological domain" description="Virion surface" evidence="1">
    <location>
        <begin position="37"/>
        <end position="468"/>
    </location>
</feature>
<feature type="region of interest" description="Involved in apical transport and lipid raft association" evidence="1">
    <location>
        <begin position="11"/>
        <end position="33"/>
    </location>
</feature>
<feature type="region of interest" description="Hypervariable stalk region" evidence="1">
    <location>
        <begin position="36"/>
        <end position="80"/>
    </location>
</feature>
<feature type="region of interest" description="Head of neuraminidase" evidence="1">
    <location>
        <begin position="83"/>
        <end position="468"/>
    </location>
</feature>
<feature type="active site" description="Proton donor/acceptor" evidence="1">
    <location>
        <position position="143"/>
    </location>
</feature>
<feature type="active site" description="Nucleophile" evidence="1">
    <location>
        <position position="399"/>
    </location>
</feature>
<feature type="binding site" evidence="1">
    <location>
        <position position="110"/>
    </location>
    <ligand>
        <name>substrate</name>
    </ligand>
</feature>
<feature type="binding site" evidence="1">
    <location>
        <position position="144"/>
    </location>
    <ligand>
        <name>substrate</name>
    </ligand>
</feature>
<feature type="binding site" evidence="1">
    <location>
        <begin position="269"/>
        <end position="270"/>
    </location>
    <ligand>
        <name>substrate</name>
    </ligand>
</feature>
<feature type="binding site" evidence="1">
    <location>
        <position position="285"/>
    </location>
    <ligand>
        <name>substrate</name>
    </ligand>
</feature>
<feature type="binding site" evidence="1">
    <location>
        <position position="286"/>
    </location>
    <ligand>
        <name>Ca(2+)</name>
        <dbReference type="ChEBI" id="CHEBI:29108"/>
    </ligand>
</feature>
<feature type="binding site" evidence="1">
    <location>
        <position position="290"/>
    </location>
    <ligand>
        <name>Ca(2+)</name>
        <dbReference type="ChEBI" id="CHEBI:29108"/>
    </ligand>
</feature>
<feature type="binding site" evidence="1">
    <location>
        <position position="316"/>
    </location>
    <ligand>
        <name>Ca(2+)</name>
        <dbReference type="ChEBI" id="CHEBI:29108"/>
    </ligand>
</feature>
<feature type="binding site" evidence="1">
    <location>
        <position position="365"/>
    </location>
    <ligand>
        <name>substrate</name>
    </ligand>
</feature>
<feature type="glycosylation site" description="N-linked (GlcNAc...) asparagine; by host" evidence="1">
    <location>
        <position position="46"/>
    </location>
</feature>
<feature type="glycosylation site" description="N-linked (GlcNAc...) asparagine; by host" evidence="1">
    <location>
        <position position="52"/>
    </location>
</feature>
<feature type="glycosylation site" description="N-linked (GlcNAc...) asparagine; by host" evidence="1">
    <location>
        <position position="65"/>
    </location>
</feature>
<feature type="glycosylation site" description="N-linked (GlcNAc...) asparagine; by host" evidence="1">
    <location>
        <position position="78"/>
    </location>
</feature>
<feature type="glycosylation site" description="N-linked (GlcNAc...) asparagine; by host" evidence="1">
    <location>
        <position position="138"/>
    </location>
</feature>
<feature type="glycosylation site" description="N-linked (GlcNAc...) asparagine; by host" evidence="1">
    <location>
        <position position="395"/>
    </location>
</feature>
<feature type="disulfide bond" evidence="1">
    <location>
        <begin position="84"/>
        <end position="414"/>
    </location>
</feature>
<feature type="disulfide bond" evidence="1">
    <location>
        <begin position="116"/>
        <end position="121"/>
    </location>
</feature>
<feature type="disulfide bond" evidence="1">
    <location>
        <begin position="176"/>
        <end position="223"/>
    </location>
</feature>
<feature type="disulfide bond" evidence="1">
    <location>
        <begin position="225"/>
        <end position="230"/>
    </location>
</feature>
<feature type="disulfide bond" evidence="1">
    <location>
        <begin position="271"/>
        <end position="284"/>
    </location>
</feature>
<feature type="disulfide bond" evidence="1">
    <location>
        <begin position="273"/>
        <end position="282"/>
    </location>
</feature>
<feature type="disulfide bond" evidence="1">
    <location>
        <begin position="310"/>
        <end position="329"/>
    </location>
</feature>
<feature type="disulfide bond" evidence="1">
    <location>
        <begin position="418"/>
        <end position="444"/>
    </location>
</feature>
<feature type="sequence conflict" description="In Ref. 3; CAA24278." ref="3">
    <original>V</original>
    <variation>G</variation>
    <location>
        <position position="26"/>
    </location>
</feature>
<feature type="sequence conflict" description="In Ref. 3; CAA24278." ref="3">
    <original>LGI</original>
    <variation>WGT</variation>
    <location>
        <begin position="31"/>
        <end position="33"/>
    </location>
</feature>
<feature type="sequence conflict" description="In Ref. 3; CAA24278." ref="3">
    <original>V</original>
    <variation>A</variation>
    <location>
        <position position="50"/>
    </location>
</feature>
<feature type="sequence conflict" description="In Ref. 3; CAA24278." ref="3">
    <original>VRVET</original>
    <variation>ARAEK</variation>
    <location>
        <begin position="55"/>
        <end position="59"/>
    </location>
</feature>
<feature type="sequence conflict" description="In Ref. 3; CAA24278." ref="3">
    <original>YL</original>
    <variation>HS</variation>
    <location>
        <begin position="69"/>
        <end position="70"/>
    </location>
</feature>
<feature type="sequence conflict" description="In Ref. 3; CAA24278." ref="3">
    <original>C</original>
    <variation>R</variation>
    <location>
        <position position="84"/>
    </location>
</feature>
<feature type="sequence conflict" description="In Ref. 3; CAA24278." ref="3">
    <original>KDNGIRIGSRGHIF</original>
    <variation>NGHGTRTGQEGTHS</variation>
    <location>
        <begin position="94"/>
        <end position="107"/>
    </location>
</feature>
<feature type="sequence conflict" description="In Ref. 2; BAF36387." ref="2">
    <original>S</original>
    <variation>A</variation>
    <location>
        <position position="115"/>
    </location>
</feature>
<feature type="sequence conflict" description="In Ref. 2; BAF36387." ref="2">
    <original>R</original>
    <variation>G</variation>
    <location>
        <position position="335"/>
    </location>
</feature>
<comment type="function">
    <text evidence="1">Catalyzes the removal of terminal sialic acid residues from viral and cellular glycoconjugates. Cleaves off the terminal sialic acids on the glycosylated HA during virus budding to facilitate virus release. Additionally helps virus spread through the circulation by further removing sialic acids from the cell surface. These cleavages prevent self-aggregation and ensure the efficient spread of the progeny virus from cell to cell. Otherwise, infection would be limited to one round of replication. Described as a receptor-destroying enzyme because it cleaves a terminal sialic acid from the cellular receptors. May facilitate viral invasion of the upper airways by cleaving the sialic acid moieties on the mucin of the airway epithelial cells. Likely to plays a role in the budding process through its association with lipid rafts during intracellular transport. May additionally display a raft-association independent effect on budding. Plays a role in the determination of host range restriction on replication and virulence. Sialidase activity in late endosome/lysosome traffic seems to enhance virus replication.</text>
</comment>
<comment type="catalytic activity">
    <reaction evidence="1">
        <text>Hydrolysis of alpha-(2-&gt;3)-, alpha-(2-&gt;6)-, alpha-(2-&gt;8)- glycosidic linkages of terminal sialic acid residues in oligosaccharides, glycoproteins, glycolipids, colominic acid and synthetic substrates.</text>
        <dbReference type="EC" id="3.2.1.18"/>
    </reaction>
</comment>
<comment type="cofactor">
    <cofactor evidence="1">
        <name>Ca(2+)</name>
        <dbReference type="ChEBI" id="CHEBI:29108"/>
    </cofactor>
</comment>
<comment type="activity regulation">
    <text evidence="1">Inhibited by the neuraminidase inhibitors zanamivir (Relenza) and oseltamivir (Tamiflu). These drugs interfere with the release of progeny virus from infected cells and are effective against all influenza strains. Resistance to neuraminidase inhibitors is quite rare.</text>
</comment>
<comment type="subunit">
    <text evidence="1">Homotetramer.</text>
</comment>
<comment type="subcellular location">
    <subcellularLocation>
        <location evidence="1">Virion membrane</location>
    </subcellularLocation>
    <subcellularLocation>
        <location evidence="1">Host apical cell membrane</location>
        <topology evidence="1">Single-pass type II membrane protein</topology>
    </subcellularLocation>
    <text evidence="1">Preferentially accumulates at the apical plasma membrane in infected polarized epithelial cells, which is the virus assembly site. Uses lipid rafts for cell surface transport and apical sorting. In the virion, forms a mushroom-shaped spike on the surface of the membrane.</text>
</comment>
<comment type="domain">
    <text evidence="1">Intact N-terminus is essential for virion morphogenesis. Possesses two apical sorting signals, one in the ectodomain, which is likely to be a glycan, and the other in the transmembrane domain. The transmembrane domain also plays a role in lipid raft association.</text>
</comment>
<comment type="PTM">
    <text evidence="1">N-glycosylated.</text>
</comment>
<comment type="miscellaneous">
    <text>The influenza A genome consist of 8 RNA segments. Genetic variation of hemagglutinin and/or neuraminidase genes results in the emergence of new influenza strains. The mechanism of variation can be the result of point mutations or the result of genetic reassortment between segments of two different strains.</text>
</comment>
<comment type="similarity">
    <text evidence="1">Belongs to the glycosyl hydrolase 34 family.</text>
</comment>
<reference key="1">
    <citation type="journal article" date="1989" name="Virology">
        <title>Molecular cloning and analysis of the N5 neuraminidase subtype from an avian influenza virus.</title>
        <authorList>
            <person name="Harley V.R."/>
            <person name="Ward C.W."/>
            <person name="Hudson P.J."/>
        </authorList>
    </citation>
    <scope>NUCLEOTIDE SEQUENCE [GENOMIC RNA]</scope>
</reference>
<reference key="2">
    <citation type="submission" date="2006-11" db="EMBL/GenBank/DDBJ databases">
        <title>Establishment of gene library of all haemagglutinin (HA) and neuraminidase (NA) subtypes for the control of influenza A virus infection.</title>
        <authorList>
            <person name="Kida H."/>
            <person name="Sakoda Y."/>
        </authorList>
    </citation>
    <scope>NUCLEOTIDE SEQUENCE [GENOMIC RNA]</scope>
</reference>
<reference key="3">
    <citation type="journal article" date="1982" name="Biochemistry">
        <title>Variation in the membrane-insertion and 'stalk' sequences in eight subtypes of influenza type A virus neuraminidase.</title>
        <authorList>
            <person name="Blok J."/>
            <person name="Air G.M."/>
        </authorList>
    </citation>
    <scope>NUCLEOTIDE SEQUENCE [GENOMIC RNA] OF 1-107</scope>
</reference>
<reference key="4">
    <citation type="journal article" date="2004" name="Virus Res.">
        <title>Assembly and budding of influenza virus.</title>
        <authorList>
            <person name="Nayak D.P."/>
            <person name="Hui E.K."/>
            <person name="Barman S."/>
        </authorList>
    </citation>
    <scope>REVIEW</scope>
</reference>
<reference key="5">
    <citation type="journal article" date="2005" name="N. Engl. J. Med.">
        <title>Neuraminidase inhibitors for influenza.</title>
        <authorList>
            <person name="Moscona A."/>
        </authorList>
    </citation>
    <scope>REVIEW</scope>
</reference>
<reference key="6">
    <citation type="journal article" date="2005" name="Biol. Pharm. Bull.">
        <title>Sialobiology of influenza: molecular mechanism of host range variation of influenza viruses.</title>
        <authorList>
            <person name="Suzuki Y."/>
        </authorList>
    </citation>
    <scope>REVIEW</scope>
</reference>
<name>NRAM_I72A5</name>
<dbReference type="EC" id="3.2.1.18" evidence="1"/>
<dbReference type="EMBL" id="M24740">
    <property type="protein sequence ID" value="AAA43672.1"/>
    <property type="molecule type" value="Genomic_RNA"/>
</dbReference>
<dbReference type="EMBL" id="AB278601">
    <property type="protein sequence ID" value="BAF36387.1"/>
    <property type="molecule type" value="Genomic_RNA"/>
</dbReference>
<dbReference type="EMBL" id="V01094">
    <property type="protein sequence ID" value="CAA24278.1"/>
    <property type="molecule type" value="Unassigned_RNA"/>
</dbReference>
<dbReference type="PIR" id="A00890">
    <property type="entry name" value="NMIVN5"/>
</dbReference>
<dbReference type="SMR" id="P03478"/>
<dbReference type="CAZy" id="GH34">
    <property type="family name" value="Glycoside Hydrolase Family 34"/>
</dbReference>
<dbReference type="GlyCosmos" id="P03478">
    <property type="glycosylation" value="6 sites, No reported glycans"/>
</dbReference>
<dbReference type="PRO" id="PR:P03478"/>
<dbReference type="Proteomes" id="UP000157292">
    <property type="component" value="Genome"/>
</dbReference>
<dbReference type="GO" id="GO:0020002">
    <property type="term" value="C:host cell plasma membrane"/>
    <property type="evidence" value="ECO:0007669"/>
    <property type="project" value="UniProtKB-SubCell"/>
</dbReference>
<dbReference type="GO" id="GO:0016020">
    <property type="term" value="C:membrane"/>
    <property type="evidence" value="ECO:0007669"/>
    <property type="project" value="UniProtKB-UniRule"/>
</dbReference>
<dbReference type="GO" id="GO:0055036">
    <property type="term" value="C:virion membrane"/>
    <property type="evidence" value="ECO:0007669"/>
    <property type="project" value="UniProtKB-SubCell"/>
</dbReference>
<dbReference type="GO" id="GO:0004308">
    <property type="term" value="F:exo-alpha-sialidase activity"/>
    <property type="evidence" value="ECO:0007669"/>
    <property type="project" value="UniProtKB-UniRule"/>
</dbReference>
<dbReference type="GO" id="GO:0046872">
    <property type="term" value="F:metal ion binding"/>
    <property type="evidence" value="ECO:0007669"/>
    <property type="project" value="UniProtKB-UniRule"/>
</dbReference>
<dbReference type="GO" id="GO:0005975">
    <property type="term" value="P:carbohydrate metabolic process"/>
    <property type="evidence" value="ECO:0007669"/>
    <property type="project" value="InterPro"/>
</dbReference>
<dbReference type="GO" id="GO:0046761">
    <property type="term" value="P:viral budding from plasma membrane"/>
    <property type="evidence" value="ECO:0007669"/>
    <property type="project" value="UniProtKB-UniRule"/>
</dbReference>
<dbReference type="CDD" id="cd15483">
    <property type="entry name" value="Influenza_NA"/>
    <property type="match status" value="1"/>
</dbReference>
<dbReference type="Gene3D" id="2.120.10.10">
    <property type="match status" value="1"/>
</dbReference>
<dbReference type="HAMAP" id="MF_04071">
    <property type="entry name" value="INFV_NRAM"/>
    <property type="match status" value="1"/>
</dbReference>
<dbReference type="InterPro" id="IPR001860">
    <property type="entry name" value="Glyco_hydro_34"/>
</dbReference>
<dbReference type="InterPro" id="IPR033654">
    <property type="entry name" value="Sialidase_Influenza_A/B"/>
</dbReference>
<dbReference type="InterPro" id="IPR036278">
    <property type="entry name" value="Sialidase_sf"/>
</dbReference>
<dbReference type="Pfam" id="PF00064">
    <property type="entry name" value="Neur"/>
    <property type="match status" value="1"/>
</dbReference>
<dbReference type="SUPFAM" id="SSF50939">
    <property type="entry name" value="Sialidases"/>
    <property type="match status" value="1"/>
</dbReference>
<organismHost>
    <name type="scientific">Aves</name>
    <dbReference type="NCBI Taxonomy" id="8782"/>
</organismHost>
<evidence type="ECO:0000255" key="1">
    <source>
        <dbReference type="HAMAP-Rule" id="MF_04071"/>
    </source>
</evidence>
<accession>P03478</accession>
<accession>A0A9J2</accession>
<accession>Q84104</accession>
<proteinExistence type="inferred from homology"/>
<sequence>MNPNQKIITIGSASLGLVIFNILLHVASITLGIISVTKDNKVHICNTTEVYNETVRVETVVIPVNNTIYLNHEPEFLNNTEPLCDVSGFAIVSKDNGIRIGSRGHIFVIREPFVSCGPSECRTFFLTQGALLNDKHSNNTVKDRSPYRALMSVPLGSSPNAYQAKFESVGWSATACHDGKKWMAIGVSGADDDAYAVIHYGGVPTDVIRSWRKQILRTQESSCVCIKGECYWVMTDGPANNQASYKIFKSQKGMVVDEKEISFQGGHIEECSCYPNMGKVECVCRDNWNGMNRPILIFDEKLEYEVGYLCAGIPTDTPRVQDSSFTGSCTNAVGRSGTNNYGVKGFGFRQGNSVWAGRTISVSSRSGFEVLLIEDGWIRPSKTISKKVEVLNNKNWSGYSGAFTIPTAMTSKNCIVPCFWLEMIRGKPEERTSIWTSSSSTVFCGVSSEVPGWSWDDGAILPFDIDKM</sequence>
<protein>
    <recommendedName>
        <fullName evidence="1">Neuraminidase</fullName>
        <ecNumber evidence="1">3.2.1.18</ecNumber>
    </recommendedName>
</protein>
<gene>
    <name evidence="1" type="primary">NA</name>
</gene>
<organism>
    <name type="scientific">Influenza A virus (strain A/Shearwater/Australia/1972 H6N5)</name>
    <dbReference type="NCBI Taxonomy" id="383604"/>
    <lineage>
        <taxon>Viruses</taxon>
        <taxon>Riboviria</taxon>
        <taxon>Orthornavirae</taxon>
        <taxon>Negarnaviricota</taxon>
        <taxon>Polyploviricotina</taxon>
        <taxon>Insthoviricetes</taxon>
        <taxon>Articulavirales</taxon>
        <taxon>Orthomyxoviridae</taxon>
        <taxon>Alphainfluenzavirus</taxon>
        <taxon>Alphainfluenzavirus influenzae</taxon>
        <taxon>Influenza A virus</taxon>
    </lineage>
</organism>